<reference key="1">
    <citation type="journal article" date="2004" name="Proc. Natl. Acad. Sci. U.S.A.">
        <title>The genome sequence of the probiotic intestinal bacterium Lactobacillus johnsonii NCC 533.</title>
        <authorList>
            <person name="Pridmore R.D."/>
            <person name="Berger B."/>
            <person name="Desiere F."/>
            <person name="Vilanova D."/>
            <person name="Barretto C."/>
            <person name="Pittet A.-C."/>
            <person name="Zwahlen M.-C."/>
            <person name="Rouvet M."/>
            <person name="Altermann E."/>
            <person name="Barrangou R."/>
            <person name="Mollet B."/>
            <person name="Mercenier A."/>
            <person name="Klaenhammer T."/>
            <person name="Arigoni F."/>
            <person name="Schell M.A."/>
        </authorList>
    </citation>
    <scope>NUCLEOTIDE SEQUENCE [LARGE SCALE GENOMIC DNA]</scope>
    <source>
        <strain>CNCM I-1225 / La1 / NCC 533</strain>
    </source>
</reference>
<keyword id="KW-0961">Cell wall biogenesis/degradation</keyword>
<keyword id="KW-0963">Cytoplasm</keyword>
<keyword id="KW-0596">Phosphopantetheine</keyword>
<keyword id="KW-0597">Phosphoprotein</keyword>
<sequence>MDTKQAVLDILNELTGEDLSDQMDENIFENGLLDSMATVQMLLELQDKCDVTAPVSEFHREDWDTPNKIIAKVESLRNE</sequence>
<organism>
    <name type="scientific">Lactobacillus johnsonii (strain CNCM I-12250 / La1 / NCC 533)</name>
    <dbReference type="NCBI Taxonomy" id="257314"/>
    <lineage>
        <taxon>Bacteria</taxon>
        <taxon>Bacillati</taxon>
        <taxon>Bacillota</taxon>
        <taxon>Bacilli</taxon>
        <taxon>Lactobacillales</taxon>
        <taxon>Lactobacillaceae</taxon>
        <taxon>Lactobacillus</taxon>
    </lineage>
</organism>
<comment type="function">
    <text evidence="1">Carrier protein involved in the D-alanylation of lipoteichoic acid (LTA). The loading of thioester-linked D-alanine onto DltC is catalyzed by D-alanine--D-alanyl carrier protein ligase DltA. The DltC-carried D-alanyl group is further transferred to cell membrane phosphatidylglycerol (PG) by forming an ester bond, probably catalyzed by DltD. D-alanylation of LTA plays an important role in modulating the properties of the cell wall in Gram-positive bacteria, influencing the net charge of the cell wall.</text>
</comment>
<comment type="pathway">
    <text evidence="1">Cell wall biogenesis; lipoteichoic acid biosynthesis.</text>
</comment>
<comment type="subcellular location">
    <subcellularLocation>
        <location evidence="1">Cytoplasm</location>
    </subcellularLocation>
</comment>
<comment type="PTM">
    <text evidence="1">4'-phosphopantetheine is transferred from CoA to a specific serine of apo-DCP.</text>
</comment>
<comment type="similarity">
    <text evidence="1">Belongs to the DltC family.</text>
</comment>
<protein>
    <recommendedName>
        <fullName evidence="1">D-alanyl carrier protein</fullName>
        <shortName evidence="1">DCP</shortName>
    </recommendedName>
    <alternativeName>
        <fullName evidence="1">D-alanine--poly(phosphoribitol) ligase subunit 2</fullName>
    </alternativeName>
</protein>
<feature type="chain" id="PRO_0000213089" description="D-alanyl carrier protein">
    <location>
        <begin position="1"/>
        <end position="79"/>
    </location>
</feature>
<feature type="domain" description="Carrier" evidence="1">
    <location>
        <begin position="1"/>
        <end position="77"/>
    </location>
</feature>
<feature type="modified residue" description="O-(pantetheine 4'-phosphoryl)serine" evidence="1">
    <location>
        <position position="35"/>
    </location>
</feature>
<proteinExistence type="inferred from homology"/>
<gene>
    <name evidence="1" type="primary">dltC</name>
    <name type="ordered locus">LJ_1782</name>
</gene>
<dbReference type="EMBL" id="AE017198">
    <property type="protein sequence ID" value="AAS09727.1"/>
    <property type="molecule type" value="Genomic_DNA"/>
</dbReference>
<dbReference type="RefSeq" id="WP_004896464.1">
    <property type="nucleotide sequence ID" value="NC_005362.1"/>
</dbReference>
<dbReference type="SMR" id="P61399"/>
<dbReference type="GeneID" id="83571211"/>
<dbReference type="KEGG" id="ljo:LJ_1782"/>
<dbReference type="eggNOG" id="COG0236">
    <property type="taxonomic scope" value="Bacteria"/>
</dbReference>
<dbReference type="HOGENOM" id="CLU_108696_19_0_9"/>
<dbReference type="UniPathway" id="UPA00556"/>
<dbReference type="Proteomes" id="UP000000581">
    <property type="component" value="Chromosome"/>
</dbReference>
<dbReference type="GO" id="GO:0005737">
    <property type="term" value="C:cytoplasm"/>
    <property type="evidence" value="ECO:0007669"/>
    <property type="project" value="UniProtKB-SubCell"/>
</dbReference>
<dbReference type="GO" id="GO:0036370">
    <property type="term" value="F:D-alanyl carrier activity"/>
    <property type="evidence" value="ECO:0007669"/>
    <property type="project" value="UniProtKB-UniRule"/>
</dbReference>
<dbReference type="GO" id="GO:0071555">
    <property type="term" value="P:cell wall organization"/>
    <property type="evidence" value="ECO:0007669"/>
    <property type="project" value="UniProtKB-KW"/>
</dbReference>
<dbReference type="GO" id="GO:0070395">
    <property type="term" value="P:lipoteichoic acid biosynthetic process"/>
    <property type="evidence" value="ECO:0007669"/>
    <property type="project" value="UniProtKB-UniRule"/>
</dbReference>
<dbReference type="Gene3D" id="1.10.1200.10">
    <property type="entry name" value="ACP-like"/>
    <property type="match status" value="1"/>
</dbReference>
<dbReference type="HAMAP" id="MF_00565">
    <property type="entry name" value="DltC"/>
    <property type="match status" value="1"/>
</dbReference>
<dbReference type="InterPro" id="IPR036736">
    <property type="entry name" value="ACP-like_sf"/>
</dbReference>
<dbReference type="InterPro" id="IPR003230">
    <property type="entry name" value="DltC"/>
</dbReference>
<dbReference type="InterPro" id="IPR009081">
    <property type="entry name" value="PP-bd_ACP"/>
</dbReference>
<dbReference type="NCBIfam" id="TIGR01688">
    <property type="entry name" value="dltC"/>
    <property type="match status" value="1"/>
</dbReference>
<dbReference type="NCBIfam" id="NF003464">
    <property type="entry name" value="PRK05087.1"/>
    <property type="match status" value="1"/>
</dbReference>
<dbReference type="Pfam" id="PF00550">
    <property type="entry name" value="PP-binding"/>
    <property type="match status" value="1"/>
</dbReference>
<dbReference type="SUPFAM" id="SSF47336">
    <property type="entry name" value="ACP-like"/>
    <property type="match status" value="1"/>
</dbReference>
<dbReference type="PROSITE" id="PS50075">
    <property type="entry name" value="CARRIER"/>
    <property type="match status" value="1"/>
</dbReference>
<accession>P61399</accession>
<name>DLTC_LACJO</name>
<evidence type="ECO:0000255" key="1">
    <source>
        <dbReference type="HAMAP-Rule" id="MF_00565"/>
    </source>
</evidence>